<organism>
    <name type="scientific">Bacteroides thetaiotaomicron (strain ATCC 29148 / DSM 2079 / JCM 5827 / CCUG 10774 / NCTC 10582 / VPI-5482 / E50)</name>
    <dbReference type="NCBI Taxonomy" id="226186"/>
    <lineage>
        <taxon>Bacteria</taxon>
        <taxon>Pseudomonadati</taxon>
        <taxon>Bacteroidota</taxon>
        <taxon>Bacteroidia</taxon>
        <taxon>Bacteroidales</taxon>
        <taxon>Bacteroidaceae</taxon>
        <taxon>Bacteroides</taxon>
    </lineage>
</organism>
<comment type="function">
    <text evidence="1">Involved in peptide bond synthesis. Stimulates efficient translation and peptide-bond synthesis on native or reconstituted 70S ribosomes in vitro. Probably functions indirectly by altering the affinity of the ribosome for aminoacyl-tRNA, thus increasing their reactivity as acceptors for peptidyl transferase.</text>
</comment>
<comment type="pathway">
    <text evidence="1">Protein biosynthesis; polypeptide chain elongation.</text>
</comment>
<comment type="subcellular location">
    <subcellularLocation>
        <location evidence="1">Cytoplasm</location>
    </subcellularLocation>
</comment>
<comment type="similarity">
    <text evidence="1">Belongs to the elongation factor P family.</text>
</comment>
<proteinExistence type="inferred from homology"/>
<dbReference type="EMBL" id="AE015928">
    <property type="protein sequence ID" value="AAO78814.1"/>
    <property type="molecule type" value="Genomic_DNA"/>
</dbReference>
<dbReference type="RefSeq" id="NP_812620.1">
    <property type="nucleotide sequence ID" value="NC_004663.1"/>
</dbReference>
<dbReference type="RefSeq" id="WP_008766998.1">
    <property type="nucleotide sequence ID" value="NZ_UYXG01000004.1"/>
</dbReference>
<dbReference type="SMR" id="Q8A1F7"/>
<dbReference type="FunCoup" id="Q8A1F7">
    <property type="interactions" value="517"/>
</dbReference>
<dbReference type="STRING" id="226186.BT_3709"/>
<dbReference type="PaxDb" id="226186-BT_3709"/>
<dbReference type="EnsemblBacteria" id="AAO78814">
    <property type="protein sequence ID" value="AAO78814"/>
    <property type="gene ID" value="BT_3709"/>
</dbReference>
<dbReference type="GeneID" id="69588465"/>
<dbReference type="KEGG" id="bth:BT_3709"/>
<dbReference type="PATRIC" id="fig|226186.12.peg.3769"/>
<dbReference type="eggNOG" id="COG0231">
    <property type="taxonomic scope" value="Bacteria"/>
</dbReference>
<dbReference type="HOGENOM" id="CLU_074944_0_1_10"/>
<dbReference type="InParanoid" id="Q8A1F7"/>
<dbReference type="OrthoDB" id="9801844at2"/>
<dbReference type="UniPathway" id="UPA00345"/>
<dbReference type="Proteomes" id="UP000001414">
    <property type="component" value="Chromosome"/>
</dbReference>
<dbReference type="GO" id="GO:0005737">
    <property type="term" value="C:cytoplasm"/>
    <property type="evidence" value="ECO:0000318"/>
    <property type="project" value="GO_Central"/>
</dbReference>
<dbReference type="GO" id="GO:0003746">
    <property type="term" value="F:translation elongation factor activity"/>
    <property type="evidence" value="ECO:0000318"/>
    <property type="project" value="GO_Central"/>
</dbReference>
<dbReference type="GO" id="GO:0043043">
    <property type="term" value="P:peptide biosynthetic process"/>
    <property type="evidence" value="ECO:0007669"/>
    <property type="project" value="InterPro"/>
</dbReference>
<dbReference type="CDD" id="cd04470">
    <property type="entry name" value="S1_EF-P_repeat_1"/>
    <property type="match status" value="1"/>
</dbReference>
<dbReference type="CDD" id="cd05794">
    <property type="entry name" value="S1_EF-P_repeat_2"/>
    <property type="match status" value="1"/>
</dbReference>
<dbReference type="FunFam" id="2.30.30.30:FF:000003">
    <property type="entry name" value="Elongation factor P"/>
    <property type="match status" value="1"/>
</dbReference>
<dbReference type="FunFam" id="2.40.50.140:FF:000004">
    <property type="entry name" value="Elongation factor P"/>
    <property type="match status" value="1"/>
</dbReference>
<dbReference type="FunFam" id="2.40.50.140:FF:000009">
    <property type="entry name" value="Elongation factor P"/>
    <property type="match status" value="1"/>
</dbReference>
<dbReference type="Gene3D" id="2.30.30.30">
    <property type="match status" value="1"/>
</dbReference>
<dbReference type="Gene3D" id="2.40.50.140">
    <property type="entry name" value="Nucleic acid-binding proteins"/>
    <property type="match status" value="2"/>
</dbReference>
<dbReference type="HAMAP" id="MF_00141">
    <property type="entry name" value="EF_P"/>
    <property type="match status" value="1"/>
</dbReference>
<dbReference type="InterPro" id="IPR015365">
    <property type="entry name" value="Elong-fact-P_C"/>
</dbReference>
<dbReference type="InterPro" id="IPR012340">
    <property type="entry name" value="NA-bd_OB-fold"/>
</dbReference>
<dbReference type="InterPro" id="IPR014722">
    <property type="entry name" value="Rib_uL2_dom2"/>
</dbReference>
<dbReference type="InterPro" id="IPR020599">
    <property type="entry name" value="Transl_elong_fac_P/YeiP"/>
</dbReference>
<dbReference type="InterPro" id="IPR013185">
    <property type="entry name" value="Transl_elong_KOW-like"/>
</dbReference>
<dbReference type="InterPro" id="IPR001059">
    <property type="entry name" value="Transl_elong_P/YeiP_cen"/>
</dbReference>
<dbReference type="InterPro" id="IPR013852">
    <property type="entry name" value="Transl_elong_P/YeiP_CS"/>
</dbReference>
<dbReference type="InterPro" id="IPR011768">
    <property type="entry name" value="Transl_elongation_fac_P"/>
</dbReference>
<dbReference type="InterPro" id="IPR008991">
    <property type="entry name" value="Translation_prot_SH3-like_sf"/>
</dbReference>
<dbReference type="NCBIfam" id="TIGR00038">
    <property type="entry name" value="efp"/>
    <property type="match status" value="1"/>
</dbReference>
<dbReference type="NCBIfam" id="NF001810">
    <property type="entry name" value="PRK00529.1"/>
    <property type="match status" value="1"/>
</dbReference>
<dbReference type="PANTHER" id="PTHR30053">
    <property type="entry name" value="ELONGATION FACTOR P"/>
    <property type="match status" value="1"/>
</dbReference>
<dbReference type="PANTHER" id="PTHR30053:SF12">
    <property type="entry name" value="ELONGATION FACTOR P (EF-P) FAMILY PROTEIN"/>
    <property type="match status" value="1"/>
</dbReference>
<dbReference type="Pfam" id="PF01132">
    <property type="entry name" value="EFP"/>
    <property type="match status" value="1"/>
</dbReference>
<dbReference type="Pfam" id="PF08207">
    <property type="entry name" value="EFP_N"/>
    <property type="match status" value="1"/>
</dbReference>
<dbReference type="Pfam" id="PF09285">
    <property type="entry name" value="Elong-fact-P_C"/>
    <property type="match status" value="1"/>
</dbReference>
<dbReference type="PIRSF" id="PIRSF005901">
    <property type="entry name" value="EF-P"/>
    <property type="match status" value="1"/>
</dbReference>
<dbReference type="SMART" id="SM01185">
    <property type="entry name" value="EFP"/>
    <property type="match status" value="1"/>
</dbReference>
<dbReference type="SMART" id="SM00841">
    <property type="entry name" value="Elong-fact-P_C"/>
    <property type="match status" value="1"/>
</dbReference>
<dbReference type="SUPFAM" id="SSF50249">
    <property type="entry name" value="Nucleic acid-binding proteins"/>
    <property type="match status" value="2"/>
</dbReference>
<dbReference type="SUPFAM" id="SSF50104">
    <property type="entry name" value="Translation proteins SH3-like domain"/>
    <property type="match status" value="1"/>
</dbReference>
<dbReference type="PROSITE" id="PS01275">
    <property type="entry name" value="EFP"/>
    <property type="match status" value="1"/>
</dbReference>
<evidence type="ECO:0000255" key="1">
    <source>
        <dbReference type="HAMAP-Rule" id="MF_00141"/>
    </source>
</evidence>
<keyword id="KW-0963">Cytoplasm</keyword>
<keyword id="KW-0251">Elongation factor</keyword>
<keyword id="KW-0648">Protein biosynthesis</keyword>
<keyword id="KW-1185">Reference proteome</keyword>
<gene>
    <name evidence="1" type="primary">efp</name>
    <name type="ordered locus">BT_3709</name>
</gene>
<protein>
    <recommendedName>
        <fullName evidence="1">Elongation factor P</fullName>
        <shortName evidence="1">EF-P</shortName>
    </recommendedName>
</protein>
<sequence length="188" mass="21227">MINAQDIKNGTCIRMDGKLYFCIEFLHVKPGKGNTFMRTKLKDVVSGYVLERRFNIGEKLEDVRVERRPYQFLYKEGEDYIFMNQETFDQHPIAHDLINGVDFLLEGAVLDVVSDASTETVLYADMPIKVQMKVTYTEPGMKGDTATNTLKPATVESGATVRVPLFISEGETIEIDTRDGSYVGRVKA</sequence>
<feature type="chain" id="PRO_0000094200" description="Elongation factor P">
    <location>
        <begin position="1"/>
        <end position="188"/>
    </location>
</feature>
<name>EFP_BACTN</name>
<reference key="1">
    <citation type="journal article" date="2003" name="Science">
        <title>A genomic view of the human-Bacteroides thetaiotaomicron symbiosis.</title>
        <authorList>
            <person name="Xu J."/>
            <person name="Bjursell M.K."/>
            <person name="Himrod J."/>
            <person name="Deng S."/>
            <person name="Carmichael L.K."/>
            <person name="Chiang H.C."/>
            <person name="Hooper L.V."/>
            <person name="Gordon J.I."/>
        </authorList>
    </citation>
    <scope>NUCLEOTIDE SEQUENCE [LARGE SCALE GENOMIC DNA]</scope>
    <source>
        <strain>ATCC 29148 / DSM 2079 / JCM 5827 / CCUG 10774 / NCTC 10582 / VPI-5482 / E50</strain>
    </source>
</reference>
<accession>Q8A1F7</accession>